<accession>B9E7J8</accession>
<sequence>MYSEADRTLWHGRIHDNDNHAHFTNSQLVQVVDAEGELTERFDVGILGYAVDRGVYLNQGRVGTKQGPDAIRTKFGNLPLMHDLSIADFGNVTTEEKFVEDVQHEYAELIDKTNDYAKFHLLIGGGHDISYAHFKGLKALYPEQSIGVINIDAHFDLRDSEYGTSGTGFKQILDEDADAGYLVLGLQEAGNTQHLFEVAEQYDVKYVLAEDIDYDTTDEIIQSFIEQYDIIMLTLCLDVIDSAFAPGVSAPCSFGLTPQQVERLIRAVLSYGKTRHLSIAEMNPEYDIDGRTAKLVGHIMFFAVHRNPSIL</sequence>
<organism>
    <name type="scientific">Macrococcus caseolyticus (strain JCSC5402)</name>
    <name type="common">Macrococcoides caseolyticum</name>
    <dbReference type="NCBI Taxonomy" id="458233"/>
    <lineage>
        <taxon>Bacteria</taxon>
        <taxon>Bacillati</taxon>
        <taxon>Bacillota</taxon>
        <taxon>Bacilli</taxon>
        <taxon>Bacillales</taxon>
        <taxon>Staphylococcaceae</taxon>
        <taxon>Macrococcoides</taxon>
    </lineage>
</organism>
<feature type="chain" id="PRO_1000148212" description="Formimidoylglutamase">
    <location>
        <begin position="1"/>
        <end position="311"/>
    </location>
</feature>
<feature type="binding site" evidence="1">
    <location>
        <position position="127"/>
    </location>
    <ligand>
        <name>Mn(2+)</name>
        <dbReference type="ChEBI" id="CHEBI:29035"/>
        <label>1</label>
    </ligand>
</feature>
<feature type="binding site" evidence="1">
    <location>
        <position position="152"/>
    </location>
    <ligand>
        <name>Mn(2+)</name>
        <dbReference type="ChEBI" id="CHEBI:29035"/>
        <label>1</label>
    </ligand>
</feature>
<feature type="binding site" evidence="1">
    <location>
        <position position="152"/>
    </location>
    <ligand>
        <name>Mn(2+)</name>
        <dbReference type="ChEBI" id="CHEBI:29035"/>
        <label>2</label>
    </ligand>
</feature>
<feature type="binding site" evidence="1">
    <location>
        <position position="154"/>
    </location>
    <ligand>
        <name>Mn(2+)</name>
        <dbReference type="ChEBI" id="CHEBI:29035"/>
        <label>2</label>
    </ligand>
</feature>
<feature type="binding site" evidence="1">
    <location>
        <position position="156"/>
    </location>
    <ligand>
        <name>Mn(2+)</name>
        <dbReference type="ChEBI" id="CHEBI:29035"/>
        <label>1</label>
    </ligand>
</feature>
<feature type="binding site" evidence="1">
    <location>
        <position position="236"/>
    </location>
    <ligand>
        <name>Mn(2+)</name>
        <dbReference type="ChEBI" id="CHEBI:29035"/>
        <label>1</label>
    </ligand>
</feature>
<feature type="binding site" evidence="1">
    <location>
        <position position="236"/>
    </location>
    <ligand>
        <name>Mn(2+)</name>
        <dbReference type="ChEBI" id="CHEBI:29035"/>
        <label>2</label>
    </ligand>
</feature>
<feature type="binding site" evidence="1">
    <location>
        <position position="238"/>
    </location>
    <ligand>
        <name>Mn(2+)</name>
        <dbReference type="ChEBI" id="CHEBI:29035"/>
        <label>2</label>
    </ligand>
</feature>
<dbReference type="EC" id="3.5.3.8" evidence="1"/>
<dbReference type="EMBL" id="AP009484">
    <property type="protein sequence ID" value="BAH18166.1"/>
    <property type="molecule type" value="Genomic_DNA"/>
</dbReference>
<dbReference type="RefSeq" id="WP_012657364.1">
    <property type="nucleotide sequence ID" value="NC_011999.1"/>
</dbReference>
<dbReference type="SMR" id="B9E7J8"/>
<dbReference type="STRING" id="458233.MCCL_1459"/>
<dbReference type="KEGG" id="mcl:MCCL_1459"/>
<dbReference type="eggNOG" id="COG0010">
    <property type="taxonomic scope" value="Bacteria"/>
</dbReference>
<dbReference type="HOGENOM" id="CLU_039478_2_0_9"/>
<dbReference type="OrthoDB" id="9788689at2"/>
<dbReference type="UniPathway" id="UPA00379">
    <property type="reaction ID" value="UER00552"/>
</dbReference>
<dbReference type="Proteomes" id="UP000001383">
    <property type="component" value="Chromosome"/>
</dbReference>
<dbReference type="GO" id="GO:0008783">
    <property type="term" value="F:agmatinase activity"/>
    <property type="evidence" value="ECO:0007669"/>
    <property type="project" value="TreeGrafter"/>
</dbReference>
<dbReference type="GO" id="GO:0050415">
    <property type="term" value="F:formimidoylglutamase activity"/>
    <property type="evidence" value="ECO:0007669"/>
    <property type="project" value="UniProtKB-UniRule"/>
</dbReference>
<dbReference type="GO" id="GO:0030145">
    <property type="term" value="F:manganese ion binding"/>
    <property type="evidence" value="ECO:0007669"/>
    <property type="project" value="UniProtKB-UniRule"/>
</dbReference>
<dbReference type="GO" id="GO:0019556">
    <property type="term" value="P:L-histidine catabolic process to glutamate and formamide"/>
    <property type="evidence" value="ECO:0007669"/>
    <property type="project" value="UniProtKB-UniPathway"/>
</dbReference>
<dbReference type="GO" id="GO:0019557">
    <property type="term" value="P:L-histidine catabolic process to glutamate and formate"/>
    <property type="evidence" value="ECO:0007669"/>
    <property type="project" value="UniProtKB-UniPathway"/>
</dbReference>
<dbReference type="GO" id="GO:0033389">
    <property type="term" value="P:putrescine biosynthetic process from arginine, via agmatine"/>
    <property type="evidence" value="ECO:0007669"/>
    <property type="project" value="TreeGrafter"/>
</dbReference>
<dbReference type="CDD" id="cd09988">
    <property type="entry name" value="Formimidoylglutamase"/>
    <property type="match status" value="1"/>
</dbReference>
<dbReference type="Gene3D" id="3.40.800.10">
    <property type="entry name" value="Ureohydrolase domain"/>
    <property type="match status" value="1"/>
</dbReference>
<dbReference type="HAMAP" id="MF_00737">
    <property type="entry name" value="Formimidoylglutam"/>
    <property type="match status" value="1"/>
</dbReference>
<dbReference type="InterPro" id="IPR005923">
    <property type="entry name" value="HutG"/>
</dbReference>
<dbReference type="InterPro" id="IPR006035">
    <property type="entry name" value="Ureohydrolase"/>
</dbReference>
<dbReference type="InterPro" id="IPR023696">
    <property type="entry name" value="Ureohydrolase_dom_sf"/>
</dbReference>
<dbReference type="NCBIfam" id="TIGR01227">
    <property type="entry name" value="hutG"/>
    <property type="match status" value="1"/>
</dbReference>
<dbReference type="PANTHER" id="PTHR11358">
    <property type="entry name" value="ARGINASE/AGMATINASE"/>
    <property type="match status" value="1"/>
</dbReference>
<dbReference type="PANTHER" id="PTHR11358:SF35">
    <property type="entry name" value="FORMIMIDOYLGLUTAMASE"/>
    <property type="match status" value="1"/>
</dbReference>
<dbReference type="Pfam" id="PF00491">
    <property type="entry name" value="Arginase"/>
    <property type="match status" value="1"/>
</dbReference>
<dbReference type="PIRSF" id="PIRSF036979">
    <property type="entry name" value="Arginase"/>
    <property type="match status" value="1"/>
</dbReference>
<dbReference type="SUPFAM" id="SSF52768">
    <property type="entry name" value="Arginase/deacetylase"/>
    <property type="match status" value="1"/>
</dbReference>
<dbReference type="PROSITE" id="PS51409">
    <property type="entry name" value="ARGINASE_2"/>
    <property type="match status" value="1"/>
</dbReference>
<comment type="function">
    <text evidence="1">Catalyzes the conversion of N-formimidoyl-L-glutamate to L-glutamate and formamide.</text>
</comment>
<comment type="catalytic activity">
    <reaction evidence="1">
        <text>N-formimidoyl-L-glutamate + H2O = formamide + L-glutamate</text>
        <dbReference type="Rhea" id="RHEA:22492"/>
        <dbReference type="ChEBI" id="CHEBI:15377"/>
        <dbReference type="ChEBI" id="CHEBI:16397"/>
        <dbReference type="ChEBI" id="CHEBI:29985"/>
        <dbReference type="ChEBI" id="CHEBI:58928"/>
        <dbReference type="EC" id="3.5.3.8"/>
    </reaction>
</comment>
<comment type="cofactor">
    <cofactor evidence="1">
        <name>Mn(2+)</name>
        <dbReference type="ChEBI" id="CHEBI:29035"/>
    </cofactor>
    <text evidence="1">Binds 2 manganese ions per subunit.</text>
</comment>
<comment type="pathway">
    <text evidence="1">Amino-acid degradation; L-histidine degradation into L-glutamate; L-glutamate from N-formimidoyl-L-glutamate (hydrolase route): step 1/1.</text>
</comment>
<comment type="similarity">
    <text evidence="1">Belongs to the arginase family.</text>
</comment>
<name>HUTG_MACCJ</name>
<protein>
    <recommendedName>
        <fullName evidence="1">Formimidoylglutamase</fullName>
        <ecNumber evidence="1">3.5.3.8</ecNumber>
    </recommendedName>
    <alternativeName>
        <fullName evidence="1">Formiminoglutamase</fullName>
    </alternativeName>
    <alternativeName>
        <fullName evidence="1">Formiminoglutamate hydrolase</fullName>
    </alternativeName>
</protein>
<gene>
    <name evidence="1" type="primary">hutG</name>
    <name type="ordered locus">MCCL_1459</name>
</gene>
<evidence type="ECO:0000255" key="1">
    <source>
        <dbReference type="HAMAP-Rule" id="MF_00737"/>
    </source>
</evidence>
<keyword id="KW-0369">Histidine metabolism</keyword>
<keyword id="KW-0378">Hydrolase</keyword>
<keyword id="KW-0464">Manganese</keyword>
<keyword id="KW-0479">Metal-binding</keyword>
<keyword id="KW-1185">Reference proteome</keyword>
<reference key="1">
    <citation type="journal article" date="2009" name="J. Bacteriol.">
        <title>Complete genome sequence of Macrococcus caseolyticus strain JCSCS5402, reflecting the ancestral genome of the human-pathogenic staphylococci.</title>
        <authorList>
            <person name="Baba T."/>
            <person name="Kuwahara-Arai K."/>
            <person name="Uchiyama I."/>
            <person name="Takeuchi F."/>
            <person name="Ito T."/>
            <person name="Hiramatsu K."/>
        </authorList>
    </citation>
    <scope>NUCLEOTIDE SEQUENCE [LARGE SCALE GENOMIC DNA]</scope>
    <source>
        <strain>JCSC5402</strain>
    </source>
</reference>
<proteinExistence type="inferred from homology"/>